<name>COPA_HUMAN</name>
<comment type="function">
    <text evidence="1">The coatomer is a cytosolic protein complex that binds to dilysine motifs and reversibly associates with Golgi non-clathrin-coated vesicles, which further mediate biosynthetic protein transport from the ER, via the Golgi up to the trans Golgi network. Coatomer complex is required for budding from Golgi membranes, and is essential for the retrograde Golgi-to-ER transport of dilysine-tagged proteins. In mammals, the coatomer can only be recruited by membranes associated to ADP-ribosylation factors (ARFs), which are small GTP-binding proteins; the complex also influences the Golgi structural integrity, as well as the processing, activity, and endocytic recycling of LDL receptors (By similarity).</text>
</comment>
<comment type="function">
    <text>Xenin stimulates exocrine pancreatic secretion. It inhibits pentagastrin-stimulated secretion of acid, to induce exocrine pancreatic secretion and to affect small and large intestinal motility. In the gut, xenin interacts with the neurotensin receptor.</text>
</comment>
<comment type="subunit">
    <text evidence="1 2 4 6">Oligomeric complex that consists of at least the alpha, beta, beta', gamma, delta, epsilon and zeta subunits (By similarity). Interacts with SCYL1 (By similarity). Interacts with JAGN1 (PubMed:25129144). Interacts with TMEM41B (PubMed:30352685). Interacts with SVEP1 (By similarity). Probably interacts with PEX11A.</text>
</comment>
<comment type="interaction">
    <interactant intactId="EBI-356273">
        <id>P53621</id>
    </interactant>
    <interactant intactId="EBI-310606">
        <id>Q8WUJ3</id>
        <label>CEMIP</label>
    </interactant>
    <organismsDiffer>false</organismsDiffer>
    <experiments>2</experiments>
</comment>
<comment type="interaction">
    <interactant intactId="EBI-356273">
        <id>P53621</id>
    </interactant>
    <interactant intactId="EBI-711301">
        <id>O14579</id>
        <label>COPE</label>
    </interactant>
    <organismsDiffer>false</organismsDiffer>
    <experiments>5</experiments>
</comment>
<comment type="subcellular location">
    <subcellularLocation>
        <location evidence="1">Cytoplasm</location>
    </subcellularLocation>
    <subcellularLocation>
        <location evidence="1">Golgi apparatus membrane</location>
        <topology evidence="1">Peripheral membrane protein</topology>
        <orientation evidence="1">Cytoplasmic side</orientation>
    </subcellularLocation>
    <subcellularLocation>
        <location evidence="1">Cytoplasmic vesicle</location>
        <location evidence="1">COPI-coated vesicle membrane</location>
        <topology evidence="1">Peripheral membrane protein</topology>
        <orientation evidence="1">Cytoplasmic side</orientation>
    </subcellularLocation>
    <text evidence="1">The coatomer is cytoplasmic or polymerized on the cytoplasmic side of the Golgi, as well as on the vesicles/buds originating from it.</text>
</comment>
<comment type="subcellular location">
    <molecule>Xenin</molecule>
    <subcellularLocation>
        <location evidence="1">Secreted</location>
    </subcellularLocation>
</comment>
<comment type="alternative products">
    <event type="alternative splicing"/>
    <isoform>
        <id>P53621-1</id>
        <name>1</name>
        <sequence type="displayed"/>
    </isoform>
    <isoform>
        <id>P53621-2</id>
        <name>2</name>
        <sequence type="described" ref="VSP_035043"/>
    </isoform>
</comment>
<comment type="tissue specificity">
    <text>Uniformly expressed in a wide range of adult and fetal tissues. Xenin is found in gastric, duodenal and jejunal mucosa. Circulates in the blood. Seems to be confined to specific endocrine cells.</text>
</comment>
<comment type="developmental stage">
    <text>Xenin is released into the circulation after a meal.</text>
</comment>
<comment type="RNA editing">
    <location>
        <position position="164" evidence="3"/>
    </location>
    <text>Edited at about 31%.</text>
</comment>
<comment type="disease" evidence="5">
    <disease id="DI-04454">
        <name>Autoinflammation and autoimmunity, systemic, with immune dysregulation</name>
        <acronym>AIAISD</acronym>
        <description>An autoinflammatory disorder with systemic manifestations. Clinical features include inflammatory arthritis, interstitial lung disease, alveolar hemorrhage, neuromyelitis optica, and immune complex-mediated renal disease. AIAISD inheritance is autosomal dominant with incomplete penetrance.</description>
        <dbReference type="MIM" id="616414"/>
    </disease>
    <text>The disease is caused by variants affecting the gene represented in this entry.</text>
</comment>
<comment type="online information" name="Wikipedia">
    <link uri="https://en.wikipedia.org/wiki/Xenin"/>
    <text>Xenin entry</text>
</comment>
<feature type="chain" id="PRO_0000223307" description="Coatomer subunit alpha">
    <location>
        <begin position="1"/>
        <end position="1224"/>
    </location>
</feature>
<feature type="peptide" id="PRO_0000041400" description="Proxenin">
    <location>
        <begin position="1"/>
        <end position="35"/>
    </location>
</feature>
<feature type="peptide" id="PRO_0000041401" description="Xenin">
    <location>
        <begin position="1"/>
        <end position="25"/>
    </location>
</feature>
<feature type="repeat" description="WD 1">
    <location>
        <begin position="3"/>
        <end position="38"/>
    </location>
</feature>
<feature type="repeat" description="WD 2">
    <location>
        <begin position="42"/>
        <end position="80"/>
    </location>
</feature>
<feature type="repeat" description="WD 3">
    <location>
        <begin position="84"/>
        <end position="122"/>
    </location>
</feature>
<feature type="repeat" description="WD 4">
    <location>
        <begin position="126"/>
        <end position="164"/>
    </location>
</feature>
<feature type="repeat" description="WD 5">
    <location>
        <begin position="195"/>
        <end position="234"/>
    </location>
</feature>
<feature type="repeat" description="WD 6">
    <location>
        <begin position="241"/>
        <end position="278"/>
    </location>
</feature>
<feature type="repeat" description="WD 7">
    <location>
        <begin position="282"/>
        <end position="319"/>
    </location>
</feature>
<feature type="modified residue" description="Phosphoserine" evidence="9 10 11 12 13 14 15 16">
    <location>
        <position position="173"/>
    </location>
</feature>
<feature type="modified residue" description="Phosphothreonine" evidence="14">
    <location>
        <position position="185"/>
    </location>
</feature>
<feature type="modified residue" description="Phosphoserine" evidence="11 15">
    <location>
        <position position="402"/>
    </location>
</feature>
<feature type="modified residue" description="Phosphothreonine" evidence="16">
    <location>
        <position position="591"/>
    </location>
</feature>
<feature type="modified residue" description="Phosphoserine" evidence="12 18">
    <location>
        <position position="895"/>
    </location>
</feature>
<feature type="modified residue" description="Omega-N-methylarginine" evidence="17">
    <location>
        <position position="965"/>
    </location>
</feature>
<feature type="modified residue" description="Phosphoserine" evidence="16">
    <location>
        <position position="1193"/>
    </location>
</feature>
<feature type="splice variant" id="VSP_035043" description="In isoform 2." evidence="7">
    <original>H</original>
    <variation>HEHSCPLPLT</variation>
    <location>
        <position position="509"/>
    </location>
</feature>
<feature type="sequence variant" id="VAR_066525" description="In RNA edited version.">
    <original>I</original>
    <variation>V</variation>
    <location>
        <position position="164"/>
    </location>
</feature>
<feature type="sequence variant" id="VAR_073844" description="In AIAISD; causes a defect in retrograde transport from the Golgi to the endoplasmic reticulum; dbSNP:rs864309710." evidence="5">
    <original>K</original>
    <variation>N</variation>
    <location>
        <position position="230"/>
    </location>
</feature>
<feature type="sequence variant" id="VAR_073845" description="In AIAISD; dbSNP:rs794727993." evidence="5">
    <original>R</original>
    <variation>H</variation>
    <location>
        <position position="233"/>
    </location>
</feature>
<feature type="sequence variant" id="VAR_073846" description="In AIAISD; causes a defect in retrograde transport from the Golgi to the endoplasmic reticulum; dbSNP:rs794727995." evidence="5">
    <original>E</original>
    <variation>K</variation>
    <location>
        <position position="241"/>
    </location>
</feature>
<feature type="sequence variant" id="VAR_073847" description="In AIAISD; dbSNP:rs794727994." evidence="5">
    <original>D</original>
    <variation>G</variation>
    <location>
        <position position="243"/>
    </location>
</feature>
<feature type="sequence variant" id="VAR_033803" description="In dbSNP:rs34997807.">
    <original>V</original>
    <variation>G</variation>
    <location>
        <position position="1040"/>
    </location>
</feature>
<feature type="sequence conflict" description="In Ref. 1; AAB70879." evidence="8" ref="1">
    <original>L</original>
    <variation>V</variation>
    <location>
        <position position="703"/>
    </location>
</feature>
<feature type="strand" evidence="19">
    <location>
        <begin position="1"/>
        <end position="6"/>
    </location>
</feature>
<feature type="strand" evidence="19">
    <location>
        <begin position="12"/>
        <end position="17"/>
    </location>
</feature>
<feature type="strand" evidence="19">
    <location>
        <begin position="19"/>
        <end position="28"/>
    </location>
</feature>
<feature type="strand" evidence="19">
    <location>
        <begin position="33"/>
        <end position="37"/>
    </location>
</feature>
<feature type="turn" evidence="19">
    <location>
        <begin position="38"/>
        <end position="41"/>
    </location>
</feature>
<feature type="strand" evidence="19">
    <location>
        <begin position="42"/>
        <end position="47"/>
    </location>
</feature>
<feature type="strand" evidence="19">
    <location>
        <begin position="50"/>
        <end position="52"/>
    </location>
</feature>
<feature type="strand" evidence="19">
    <location>
        <begin position="54"/>
        <end position="59"/>
    </location>
</feature>
<feature type="strand" evidence="19">
    <location>
        <begin position="61"/>
        <end position="70"/>
    </location>
</feature>
<feature type="strand" evidence="19">
    <location>
        <begin position="75"/>
        <end position="79"/>
    </location>
</feature>
<feature type="turn" evidence="19">
    <location>
        <begin position="80"/>
        <end position="83"/>
    </location>
</feature>
<feature type="strand" evidence="19">
    <location>
        <begin position="84"/>
        <end position="89"/>
    </location>
</feature>
<feature type="strand" evidence="19">
    <location>
        <begin position="96"/>
        <end position="101"/>
    </location>
</feature>
<feature type="strand" evidence="19">
    <location>
        <begin position="103"/>
        <end position="112"/>
    </location>
</feature>
<feature type="strand" evidence="19">
    <location>
        <begin position="117"/>
        <end position="121"/>
    </location>
</feature>
<feature type="turn" evidence="19">
    <location>
        <begin position="122"/>
        <end position="125"/>
    </location>
</feature>
<feature type="strand" evidence="19">
    <location>
        <begin position="126"/>
        <end position="131"/>
    </location>
</feature>
<feature type="strand" evidence="19">
    <location>
        <begin position="138"/>
        <end position="143"/>
    </location>
</feature>
<feature type="strand" evidence="19">
    <location>
        <begin position="145"/>
        <end position="154"/>
    </location>
</feature>
<feature type="strand" evidence="19">
    <location>
        <begin position="159"/>
        <end position="163"/>
    </location>
</feature>
<feature type="helix" evidence="19">
    <location>
        <begin position="165"/>
        <end position="172"/>
    </location>
</feature>
<feature type="strand" evidence="19">
    <location>
        <begin position="195"/>
        <end position="201"/>
    </location>
</feature>
<feature type="strand" evidence="19">
    <location>
        <begin position="208"/>
        <end position="213"/>
    </location>
</feature>
<feature type="strand" evidence="19">
    <location>
        <begin position="215"/>
        <end position="224"/>
    </location>
</feature>
<feature type="strand" evidence="19">
    <location>
        <begin position="229"/>
        <end position="234"/>
    </location>
</feature>
<feature type="strand" evidence="19">
    <location>
        <begin position="239"/>
        <end position="245"/>
    </location>
</feature>
<feature type="strand" evidence="19">
    <location>
        <begin position="252"/>
        <end position="257"/>
    </location>
</feature>
<feature type="strand" evidence="19">
    <location>
        <begin position="259"/>
        <end position="268"/>
    </location>
</feature>
<feature type="strand" evidence="19">
    <location>
        <begin position="271"/>
        <end position="277"/>
    </location>
</feature>
<feature type="strand" evidence="19">
    <location>
        <begin position="285"/>
        <end position="288"/>
    </location>
</feature>
<feature type="strand" evidence="19">
    <location>
        <begin position="294"/>
        <end position="299"/>
    </location>
</feature>
<feature type="strand" evidence="19">
    <location>
        <begin position="301"/>
        <end position="304"/>
    </location>
</feature>
<feature type="strand" evidence="19">
    <location>
        <begin position="306"/>
        <end position="310"/>
    </location>
</feature>
<feature type="strand" evidence="19">
    <location>
        <begin position="313"/>
        <end position="319"/>
    </location>
</feature>
<feature type="helix" evidence="20">
    <location>
        <begin position="916"/>
        <end position="923"/>
    </location>
</feature>
<feature type="helix" evidence="20">
    <location>
        <begin position="927"/>
        <end position="932"/>
    </location>
</feature>
<feature type="helix" evidence="20">
    <location>
        <begin position="936"/>
        <end position="947"/>
    </location>
</feature>
<feature type="helix" evidence="20">
    <location>
        <begin position="953"/>
        <end position="955"/>
    </location>
</feature>
<feature type="helix" evidence="20">
    <location>
        <begin position="956"/>
        <end position="964"/>
    </location>
</feature>
<feature type="strand" evidence="20">
    <location>
        <begin position="968"/>
        <end position="970"/>
    </location>
</feature>
<feature type="strand" evidence="20">
    <location>
        <begin position="979"/>
        <end position="981"/>
    </location>
</feature>
<feature type="helix" evidence="20">
    <location>
        <begin position="987"/>
        <end position="989"/>
    </location>
</feature>
<feature type="turn" evidence="20">
    <location>
        <begin position="991"/>
        <end position="993"/>
    </location>
</feature>
<feature type="helix" evidence="20">
    <location>
        <begin position="1003"/>
        <end position="1019"/>
    </location>
</feature>
<feature type="helix" evidence="20">
    <location>
        <begin position="1022"/>
        <end position="1035"/>
    </location>
</feature>
<feature type="helix" evidence="20">
    <location>
        <begin position="1036"/>
        <end position="1038"/>
    </location>
</feature>
<feature type="helix" evidence="20">
    <location>
        <begin position="1044"/>
        <end position="1072"/>
    </location>
</feature>
<feature type="helix" evidence="20">
    <location>
        <begin position="1078"/>
        <end position="1091"/>
    </location>
</feature>
<feature type="helix" evidence="20">
    <location>
        <begin position="1098"/>
        <end position="1115"/>
    </location>
</feature>
<feature type="helix" evidence="20">
    <location>
        <begin position="1118"/>
        <end position="1130"/>
    </location>
</feature>
<feature type="helix" evidence="20">
    <location>
        <begin position="1135"/>
        <end position="1149"/>
    </location>
</feature>
<feature type="strand" evidence="20">
    <location>
        <begin position="1154"/>
        <end position="1156"/>
    </location>
</feature>
<feature type="strand" evidence="20">
    <location>
        <begin position="1166"/>
        <end position="1168"/>
    </location>
</feature>
<feature type="turn" evidence="20">
    <location>
        <begin position="1170"/>
        <end position="1172"/>
    </location>
</feature>
<feature type="strand" evidence="20">
    <location>
        <begin position="1175"/>
        <end position="1177"/>
    </location>
</feature>
<feature type="turn" evidence="20">
    <location>
        <begin position="1186"/>
        <end position="1188"/>
    </location>
</feature>
<feature type="helix" evidence="20">
    <location>
        <begin position="1194"/>
        <end position="1196"/>
    </location>
</feature>
<feature type="turn" evidence="20">
    <location>
        <begin position="1202"/>
        <end position="1204"/>
    </location>
</feature>
<feature type="strand" evidence="20">
    <location>
        <begin position="1205"/>
        <end position="1208"/>
    </location>
</feature>
<feature type="helix" evidence="20">
    <location>
        <begin position="1220"/>
        <end position="1222"/>
    </location>
</feature>
<accession>P53621</accession>
<accession>Q5T201</accession>
<accession>Q8IXZ9</accession>
<organism>
    <name type="scientific">Homo sapiens</name>
    <name type="common">Human</name>
    <dbReference type="NCBI Taxonomy" id="9606"/>
    <lineage>
        <taxon>Eukaryota</taxon>
        <taxon>Metazoa</taxon>
        <taxon>Chordata</taxon>
        <taxon>Craniata</taxon>
        <taxon>Vertebrata</taxon>
        <taxon>Euteleostomi</taxon>
        <taxon>Mammalia</taxon>
        <taxon>Eutheria</taxon>
        <taxon>Euarchontoglires</taxon>
        <taxon>Primates</taxon>
        <taxon>Haplorrhini</taxon>
        <taxon>Catarrhini</taxon>
        <taxon>Hominidae</taxon>
        <taxon>Homo</taxon>
    </lineage>
</organism>
<reference key="1">
    <citation type="journal article" date="1996" name="Gene">
        <title>HEP-COP, a novel human gene whose product is highly homologous to the alpha-subunit of the yeast coatomer protein complex.</title>
        <authorList>
            <person name="Chow V.T.K."/>
            <person name="Quek H.H."/>
        </authorList>
    </citation>
    <scope>NUCLEOTIDE SEQUENCE [MRNA] (ISOFORM 1)</scope>
</reference>
<reference key="2">
    <citation type="journal article" date="2006" name="Nature">
        <title>The DNA sequence and biological annotation of human chromosome 1.</title>
        <authorList>
            <person name="Gregory S.G."/>
            <person name="Barlow K.F."/>
            <person name="McLay K.E."/>
            <person name="Kaul R."/>
            <person name="Swarbreck D."/>
            <person name="Dunham A."/>
            <person name="Scott C.E."/>
            <person name="Howe K.L."/>
            <person name="Woodfine K."/>
            <person name="Spencer C.C.A."/>
            <person name="Jones M.C."/>
            <person name="Gillson C."/>
            <person name="Searle S."/>
            <person name="Zhou Y."/>
            <person name="Kokocinski F."/>
            <person name="McDonald L."/>
            <person name="Evans R."/>
            <person name="Phillips K."/>
            <person name="Atkinson A."/>
            <person name="Cooper R."/>
            <person name="Jones C."/>
            <person name="Hall R.E."/>
            <person name="Andrews T.D."/>
            <person name="Lloyd C."/>
            <person name="Ainscough R."/>
            <person name="Almeida J.P."/>
            <person name="Ambrose K.D."/>
            <person name="Anderson F."/>
            <person name="Andrew R.W."/>
            <person name="Ashwell R.I.S."/>
            <person name="Aubin K."/>
            <person name="Babbage A.K."/>
            <person name="Bagguley C.L."/>
            <person name="Bailey J."/>
            <person name="Beasley H."/>
            <person name="Bethel G."/>
            <person name="Bird C.P."/>
            <person name="Bray-Allen S."/>
            <person name="Brown J.Y."/>
            <person name="Brown A.J."/>
            <person name="Buckley D."/>
            <person name="Burton J."/>
            <person name="Bye J."/>
            <person name="Carder C."/>
            <person name="Chapman J.C."/>
            <person name="Clark S.Y."/>
            <person name="Clarke G."/>
            <person name="Clee C."/>
            <person name="Cobley V."/>
            <person name="Collier R.E."/>
            <person name="Corby N."/>
            <person name="Coville G.J."/>
            <person name="Davies J."/>
            <person name="Deadman R."/>
            <person name="Dunn M."/>
            <person name="Earthrowl M."/>
            <person name="Ellington A.G."/>
            <person name="Errington H."/>
            <person name="Frankish A."/>
            <person name="Frankland J."/>
            <person name="French L."/>
            <person name="Garner P."/>
            <person name="Garnett J."/>
            <person name="Gay L."/>
            <person name="Ghori M.R.J."/>
            <person name="Gibson R."/>
            <person name="Gilby L.M."/>
            <person name="Gillett W."/>
            <person name="Glithero R.J."/>
            <person name="Grafham D.V."/>
            <person name="Griffiths C."/>
            <person name="Griffiths-Jones S."/>
            <person name="Grocock R."/>
            <person name="Hammond S."/>
            <person name="Harrison E.S.I."/>
            <person name="Hart E."/>
            <person name="Haugen E."/>
            <person name="Heath P.D."/>
            <person name="Holmes S."/>
            <person name="Holt K."/>
            <person name="Howden P.J."/>
            <person name="Hunt A.R."/>
            <person name="Hunt S.E."/>
            <person name="Hunter G."/>
            <person name="Isherwood J."/>
            <person name="James R."/>
            <person name="Johnson C."/>
            <person name="Johnson D."/>
            <person name="Joy A."/>
            <person name="Kay M."/>
            <person name="Kershaw J.K."/>
            <person name="Kibukawa M."/>
            <person name="Kimberley A.M."/>
            <person name="King A."/>
            <person name="Knights A.J."/>
            <person name="Lad H."/>
            <person name="Laird G."/>
            <person name="Lawlor S."/>
            <person name="Leongamornlert D.A."/>
            <person name="Lloyd D.M."/>
            <person name="Loveland J."/>
            <person name="Lovell J."/>
            <person name="Lush M.J."/>
            <person name="Lyne R."/>
            <person name="Martin S."/>
            <person name="Mashreghi-Mohammadi M."/>
            <person name="Matthews L."/>
            <person name="Matthews N.S.W."/>
            <person name="McLaren S."/>
            <person name="Milne S."/>
            <person name="Mistry S."/>
            <person name="Moore M.J.F."/>
            <person name="Nickerson T."/>
            <person name="O'Dell C.N."/>
            <person name="Oliver K."/>
            <person name="Palmeiri A."/>
            <person name="Palmer S.A."/>
            <person name="Parker A."/>
            <person name="Patel D."/>
            <person name="Pearce A.V."/>
            <person name="Peck A.I."/>
            <person name="Pelan S."/>
            <person name="Phelps K."/>
            <person name="Phillimore B.J."/>
            <person name="Plumb R."/>
            <person name="Rajan J."/>
            <person name="Raymond C."/>
            <person name="Rouse G."/>
            <person name="Saenphimmachak C."/>
            <person name="Sehra H.K."/>
            <person name="Sheridan E."/>
            <person name="Shownkeen R."/>
            <person name="Sims S."/>
            <person name="Skuce C.D."/>
            <person name="Smith M."/>
            <person name="Steward C."/>
            <person name="Subramanian S."/>
            <person name="Sycamore N."/>
            <person name="Tracey A."/>
            <person name="Tromans A."/>
            <person name="Van Helmond Z."/>
            <person name="Wall M."/>
            <person name="Wallis J.M."/>
            <person name="White S."/>
            <person name="Whitehead S.L."/>
            <person name="Wilkinson J.E."/>
            <person name="Willey D.L."/>
            <person name="Williams H."/>
            <person name="Wilming L."/>
            <person name="Wray P.W."/>
            <person name="Wu Z."/>
            <person name="Coulson A."/>
            <person name="Vaudin M."/>
            <person name="Sulston J.E."/>
            <person name="Durbin R.M."/>
            <person name="Hubbard T."/>
            <person name="Wooster R."/>
            <person name="Dunham I."/>
            <person name="Carter N.P."/>
            <person name="McVean G."/>
            <person name="Ross M.T."/>
            <person name="Harrow J."/>
            <person name="Olson M.V."/>
            <person name="Beck S."/>
            <person name="Rogers J."/>
            <person name="Bentley D.R."/>
        </authorList>
    </citation>
    <scope>NUCLEOTIDE SEQUENCE [LARGE SCALE GENOMIC DNA]</scope>
</reference>
<reference key="3">
    <citation type="submission" date="2005-09" db="EMBL/GenBank/DDBJ databases">
        <authorList>
            <person name="Mural R.J."/>
            <person name="Istrail S."/>
            <person name="Sutton G.G."/>
            <person name="Florea L."/>
            <person name="Halpern A.L."/>
            <person name="Mobarry C.M."/>
            <person name="Lippert R."/>
            <person name="Walenz B."/>
            <person name="Shatkay H."/>
            <person name="Dew I."/>
            <person name="Miller J.R."/>
            <person name="Flanigan M.J."/>
            <person name="Edwards N.J."/>
            <person name="Bolanos R."/>
            <person name="Fasulo D."/>
            <person name="Halldorsson B.V."/>
            <person name="Hannenhalli S."/>
            <person name="Turner R."/>
            <person name="Yooseph S."/>
            <person name="Lu F."/>
            <person name="Nusskern D.R."/>
            <person name="Shue B.C."/>
            <person name="Zheng X.H."/>
            <person name="Zhong F."/>
            <person name="Delcher A.L."/>
            <person name="Huson D.H."/>
            <person name="Kravitz S.A."/>
            <person name="Mouchard L."/>
            <person name="Reinert K."/>
            <person name="Remington K.A."/>
            <person name="Clark A.G."/>
            <person name="Waterman M.S."/>
            <person name="Eichler E.E."/>
            <person name="Adams M.D."/>
            <person name="Hunkapiller M.W."/>
            <person name="Myers E.W."/>
            <person name="Venter J.C."/>
        </authorList>
    </citation>
    <scope>NUCLEOTIDE SEQUENCE [LARGE SCALE GENOMIC DNA]</scope>
</reference>
<reference key="4">
    <citation type="journal article" date="2004" name="Genome Res.">
        <title>The status, quality, and expansion of the NIH full-length cDNA project: the Mammalian Gene Collection (MGC).</title>
        <authorList>
            <consortium name="The MGC Project Team"/>
        </authorList>
    </citation>
    <scope>NUCLEOTIDE SEQUENCE [LARGE SCALE MRNA] (ISOFORM 2)</scope>
    <source>
        <tissue>Uterus</tissue>
    </source>
</reference>
<reference key="5">
    <citation type="journal article" date="1992" name="J. Biol. Chem.">
        <title>Identification of xenin, a xenopsin-related peptide, in the human gastric mucosa and its effect on exocrine pancreatic secretion.</title>
        <authorList>
            <person name="Feurle G.E."/>
            <person name="Hamscher G."/>
            <person name="Kusiek R."/>
            <person name="Meyer H.E."/>
            <person name="Metzger J.W."/>
        </authorList>
    </citation>
    <scope>PROTEIN SEQUENCE OF 1-25 (XENIN)</scope>
    <source>
        <tissue>Gastric mucosa</tissue>
    </source>
</reference>
<reference key="6">
    <citation type="journal article" date="1997" name="Ann. Hum. Genet.">
        <title>Alpha coat protein COPA (HEP-COP): presence of an Alu repeat in cDNA and identity of the amino terminus to xenin.</title>
        <authorList>
            <person name="Chow V.T.K."/>
            <person name="Quek H.H."/>
        </authorList>
    </citation>
    <scope>PROTEOLYTIC PROCESSING OF COPA TO PRODUCE XENIN</scope>
</reference>
<reference key="7">
    <citation type="journal article" date="1998" name="Peptides">
        <title>Xenin -- a review.</title>
        <authorList>
            <person name="Feurle G.E."/>
        </authorList>
    </citation>
    <scope>REVIEW ON XENIN</scope>
</reference>
<reference key="8">
    <citation type="journal article" date="2006" name="Cell">
        <title>Global, in vivo, and site-specific phosphorylation dynamics in signaling networks.</title>
        <authorList>
            <person name="Olsen J.V."/>
            <person name="Blagoev B."/>
            <person name="Gnad F."/>
            <person name="Macek B."/>
            <person name="Kumar C."/>
            <person name="Mortensen P."/>
            <person name="Mann M."/>
        </authorList>
    </citation>
    <scope>PHOSPHORYLATION [LARGE SCALE ANALYSIS] AT SER-173</scope>
    <scope>IDENTIFICATION BY MASS SPECTROMETRY [LARGE SCALE ANALYSIS]</scope>
    <source>
        <tissue>Cervix carcinoma</tissue>
    </source>
</reference>
<reference key="9">
    <citation type="journal article" date="2006" name="Nat. Biotechnol.">
        <title>A probability-based approach for high-throughput protein phosphorylation analysis and site localization.</title>
        <authorList>
            <person name="Beausoleil S.A."/>
            <person name="Villen J."/>
            <person name="Gerber S.A."/>
            <person name="Rush J."/>
            <person name="Gygi S.P."/>
        </authorList>
    </citation>
    <scope>PHOSPHORYLATION [LARGE SCALE ANALYSIS] AT SER-173</scope>
    <scope>IDENTIFICATION BY MASS SPECTROMETRY [LARGE SCALE ANALYSIS]</scope>
    <source>
        <tissue>Cervix carcinoma</tissue>
    </source>
</reference>
<reference key="10">
    <citation type="journal article" date="2008" name="Mol. Cell">
        <title>Kinase-selective enrichment enables quantitative phosphoproteomics of the kinome across the cell cycle.</title>
        <authorList>
            <person name="Daub H."/>
            <person name="Olsen J.V."/>
            <person name="Bairlein M."/>
            <person name="Gnad F."/>
            <person name="Oppermann F.S."/>
            <person name="Korner R."/>
            <person name="Greff Z."/>
            <person name="Keri G."/>
            <person name="Stemmann O."/>
            <person name="Mann M."/>
        </authorList>
    </citation>
    <scope>PHOSPHORYLATION [LARGE SCALE ANALYSIS] AT SER-173 AND SER-895</scope>
    <scope>IDENTIFICATION BY MASS SPECTROMETRY [LARGE SCALE ANALYSIS]</scope>
    <source>
        <tissue>Cervix carcinoma</tissue>
    </source>
</reference>
<reference key="11">
    <citation type="journal article" date="2008" name="Proc. Natl. Acad. Sci. U.S.A.">
        <title>A quantitative atlas of mitotic phosphorylation.</title>
        <authorList>
            <person name="Dephoure N."/>
            <person name="Zhou C."/>
            <person name="Villen J."/>
            <person name="Beausoleil S.A."/>
            <person name="Bakalarski C.E."/>
            <person name="Elledge S.J."/>
            <person name="Gygi S.P."/>
        </authorList>
    </citation>
    <scope>PHOSPHORYLATION [LARGE SCALE ANALYSIS] AT SER-173 AND SER-402</scope>
    <scope>IDENTIFICATION BY MASS SPECTROMETRY [LARGE SCALE ANALYSIS]</scope>
    <source>
        <tissue>Cervix carcinoma</tissue>
    </source>
</reference>
<reference key="12">
    <citation type="journal article" date="2009" name="Anal. Chem.">
        <title>Lys-N and trypsin cover complementary parts of the phosphoproteome in a refined SCX-based approach.</title>
        <authorList>
            <person name="Gauci S."/>
            <person name="Helbig A.O."/>
            <person name="Slijper M."/>
            <person name="Krijgsveld J."/>
            <person name="Heck A.J."/>
            <person name="Mohammed S."/>
        </authorList>
    </citation>
    <scope>IDENTIFICATION BY MASS SPECTROMETRY [LARGE SCALE ANALYSIS]</scope>
</reference>
<reference key="13">
    <citation type="journal article" date="2009" name="Sci. Signal.">
        <title>Quantitative phosphoproteomic analysis of T cell receptor signaling reveals system-wide modulation of protein-protein interactions.</title>
        <authorList>
            <person name="Mayya V."/>
            <person name="Lundgren D.H."/>
            <person name="Hwang S.-I."/>
            <person name="Rezaul K."/>
            <person name="Wu L."/>
            <person name="Eng J.K."/>
            <person name="Rodionov V."/>
            <person name="Han D.K."/>
        </authorList>
    </citation>
    <scope>PHOSPHORYLATION [LARGE SCALE ANALYSIS] AT SER-173</scope>
    <scope>IDENTIFICATION BY MASS SPECTROMETRY [LARGE SCALE ANALYSIS]</scope>
    <source>
        <tissue>Leukemic T-cell</tissue>
    </source>
</reference>
<reference key="14">
    <citation type="journal article" date="2010" name="Sci. Signal.">
        <title>Quantitative phosphoproteomics reveals widespread full phosphorylation site occupancy during mitosis.</title>
        <authorList>
            <person name="Olsen J.V."/>
            <person name="Vermeulen M."/>
            <person name="Santamaria A."/>
            <person name="Kumar C."/>
            <person name="Miller M.L."/>
            <person name="Jensen L.J."/>
            <person name="Gnad F."/>
            <person name="Cox J."/>
            <person name="Jensen T.S."/>
            <person name="Nigg E.A."/>
            <person name="Brunak S."/>
            <person name="Mann M."/>
        </authorList>
    </citation>
    <scope>PHOSPHORYLATION [LARGE SCALE ANALYSIS] AT SER-173 AND THR-185</scope>
    <scope>IDENTIFICATION BY MASS SPECTROMETRY [LARGE SCALE ANALYSIS]</scope>
    <source>
        <tissue>Cervix carcinoma</tissue>
    </source>
</reference>
<reference key="15">
    <citation type="journal article" date="2011" name="BMC Syst. Biol.">
        <title>Initial characterization of the human central proteome.</title>
        <authorList>
            <person name="Burkard T.R."/>
            <person name="Planyavsky M."/>
            <person name="Kaupe I."/>
            <person name="Breitwieser F.P."/>
            <person name="Buerckstuemmer T."/>
            <person name="Bennett K.L."/>
            <person name="Superti-Furga G."/>
            <person name="Colinge J."/>
        </authorList>
    </citation>
    <scope>IDENTIFICATION BY MASS SPECTROMETRY [LARGE SCALE ANALYSIS]</scope>
</reference>
<reference key="16">
    <citation type="journal article" date="2011" name="Biochem. Biophys. Res. Commun.">
        <title>Genome-wide evaluation and discovery of vertebrate A-to-I RNA editing sites.</title>
        <authorList>
            <person name="Maas S."/>
            <person name="Godfried Sie C.P."/>
            <person name="Stoev I."/>
            <person name="Dupuis D.E."/>
            <person name="Latona J."/>
            <person name="Porman A.M."/>
            <person name="Evans B."/>
            <person name="Rekawek P."/>
            <person name="Kluempers V."/>
            <person name="Mutter M."/>
            <person name="Gommans W.M."/>
            <person name="Lopresti D."/>
        </authorList>
    </citation>
    <scope>RNA EDITING OF POSITION 164</scope>
</reference>
<reference key="17">
    <citation type="journal article" date="2011" name="Sci. Signal.">
        <title>System-wide temporal characterization of the proteome and phosphoproteome of human embryonic stem cell differentiation.</title>
        <authorList>
            <person name="Rigbolt K.T."/>
            <person name="Prokhorova T.A."/>
            <person name="Akimov V."/>
            <person name="Henningsen J."/>
            <person name="Johansen P.T."/>
            <person name="Kratchmarova I."/>
            <person name="Kassem M."/>
            <person name="Mann M."/>
            <person name="Olsen J.V."/>
            <person name="Blagoev B."/>
        </authorList>
    </citation>
    <scope>PHOSPHORYLATION [LARGE SCALE ANALYSIS] AT SER-173 AND SER-402</scope>
    <scope>IDENTIFICATION BY MASS SPECTROMETRY [LARGE SCALE ANALYSIS]</scope>
</reference>
<reference key="18">
    <citation type="journal article" date="2012" name="Proc. Natl. Acad. Sci. U.S.A.">
        <title>N-terminal acetylome analyses and functional insights of the N-terminal acetyltransferase NatB.</title>
        <authorList>
            <person name="Van Damme P."/>
            <person name="Lasa M."/>
            <person name="Polevoda B."/>
            <person name="Gazquez C."/>
            <person name="Elosegui-Artola A."/>
            <person name="Kim D.S."/>
            <person name="De Juan-Pardo E."/>
            <person name="Demeyer K."/>
            <person name="Hole K."/>
            <person name="Larrea E."/>
            <person name="Timmerman E."/>
            <person name="Prieto J."/>
            <person name="Arnesen T."/>
            <person name="Sherman F."/>
            <person name="Gevaert K."/>
            <person name="Aldabe R."/>
        </authorList>
    </citation>
    <scope>IDENTIFICATION BY MASS SPECTROMETRY [LARGE SCALE ANALYSIS]</scope>
</reference>
<reference key="19">
    <citation type="journal article" date="2013" name="J. Proteome Res.">
        <title>Toward a comprehensive characterization of a human cancer cell phosphoproteome.</title>
        <authorList>
            <person name="Zhou H."/>
            <person name="Di Palma S."/>
            <person name="Preisinger C."/>
            <person name="Peng M."/>
            <person name="Polat A.N."/>
            <person name="Heck A.J."/>
            <person name="Mohammed S."/>
        </authorList>
    </citation>
    <scope>PHOSPHORYLATION [LARGE SCALE ANALYSIS] AT SER-173; THR-591 AND SER-1193</scope>
    <scope>IDENTIFICATION BY MASS SPECTROMETRY [LARGE SCALE ANALYSIS]</scope>
    <source>
        <tissue>Cervix carcinoma</tissue>
        <tissue>Erythroleukemia</tissue>
    </source>
</reference>
<reference key="20">
    <citation type="journal article" date="2014" name="J. Proteomics">
        <title>An enzyme assisted RP-RPLC approach for in-depth analysis of human liver phosphoproteome.</title>
        <authorList>
            <person name="Bian Y."/>
            <person name="Song C."/>
            <person name="Cheng K."/>
            <person name="Dong M."/>
            <person name="Wang F."/>
            <person name="Huang J."/>
            <person name="Sun D."/>
            <person name="Wang L."/>
            <person name="Ye M."/>
            <person name="Zou H."/>
        </authorList>
    </citation>
    <scope>PHOSPHORYLATION [LARGE SCALE ANALYSIS] AT SER-895</scope>
    <scope>IDENTIFICATION BY MASS SPECTROMETRY [LARGE SCALE ANALYSIS]</scope>
    <source>
        <tissue>Liver</tissue>
    </source>
</reference>
<reference key="21">
    <citation type="journal article" date="2014" name="Mol. Cell. Proteomics">
        <title>Immunoaffinity enrichment and mass spectrometry analysis of protein methylation.</title>
        <authorList>
            <person name="Guo A."/>
            <person name="Gu H."/>
            <person name="Zhou J."/>
            <person name="Mulhern D."/>
            <person name="Wang Y."/>
            <person name="Lee K.A."/>
            <person name="Yang V."/>
            <person name="Aguiar M."/>
            <person name="Kornhauser J."/>
            <person name="Jia X."/>
            <person name="Ren J."/>
            <person name="Beausoleil S.A."/>
            <person name="Silva J.C."/>
            <person name="Vemulapalli V."/>
            <person name="Bedford M.T."/>
            <person name="Comb M.J."/>
        </authorList>
    </citation>
    <scope>METHYLATION [LARGE SCALE ANALYSIS] AT ARG-965</scope>
    <scope>IDENTIFICATION BY MASS SPECTROMETRY [LARGE SCALE ANALYSIS]</scope>
    <source>
        <tissue>Colon carcinoma</tissue>
    </source>
</reference>
<reference key="22">
    <citation type="journal article" date="2014" name="Nat. Genet.">
        <title>JAGN1 deficiency causes aberrant myeloid cell homeostasis and congenital neutropenia.</title>
        <authorList>
            <person name="Boztug K."/>
            <person name="Jaervinen P.M."/>
            <person name="Salzer E."/>
            <person name="Racek T."/>
            <person name="Moench S."/>
            <person name="Garncarz W."/>
            <person name="Gertz E.M."/>
            <person name="Schaeffer A.A."/>
            <person name="Antonopoulos A."/>
            <person name="Haslam S.M."/>
            <person name="Schieck L."/>
            <person name="Puchalka J."/>
            <person name="Diestelhorst J."/>
            <person name="Appaswamy G."/>
            <person name="Lescoeur B."/>
            <person name="Giambruno R."/>
            <person name="Bigenzahn J.W."/>
            <person name="Elling U."/>
            <person name="Pfeifer D."/>
            <person name="Conde C.D."/>
            <person name="Albert M.H."/>
            <person name="Welte K."/>
            <person name="Brandes G."/>
            <person name="Sherkat R."/>
            <person name="van der Werff Ten Bosch J."/>
            <person name="Rezaei N."/>
            <person name="Etzioni A."/>
            <person name="Bellanne-Chantelot C."/>
            <person name="Superti-Furga G."/>
            <person name="Penninger J.M."/>
            <person name="Bennett K.L."/>
            <person name="von Blume J."/>
            <person name="Dell A."/>
            <person name="Donadieu J."/>
            <person name="Klein C."/>
        </authorList>
    </citation>
    <scope>INTERACTION WITH JAGN1</scope>
</reference>
<reference key="23">
    <citation type="journal article" date="2015" name="Nat. Genet.">
        <title>COPA mutations impair ER-Golgi transport and cause hereditary autoimmune-mediated lung disease and arthritis.</title>
        <authorList>
            <consortium name="Baylor-Hopkins Center for Mendelian Genomics"/>
            <person name="Watkin L.B."/>
            <person name="Jessen B."/>
            <person name="Wiszniewski W."/>
            <person name="Vece T.J."/>
            <person name="Jan M."/>
            <person name="Sha Y."/>
            <person name="Thamsen M."/>
            <person name="Santos-Cortez R.L."/>
            <person name="Lee K."/>
            <person name="Gambin T."/>
            <person name="Forbes L.R."/>
            <person name="Law C.S."/>
            <person name="Stray-Pedersen A."/>
            <person name="Cheng M.H."/>
            <person name="Mace E.M."/>
            <person name="Anderson M.S."/>
            <person name="Liu D."/>
            <person name="Tang L.F."/>
            <person name="Nicholas S.K."/>
            <person name="Nahmod K."/>
            <person name="Makedonas G."/>
            <person name="Canter D.L."/>
            <person name="Kwok P.Y."/>
            <person name="Hicks J."/>
            <person name="Jones K.D."/>
            <person name="Penney S."/>
            <person name="Jhangiani S.N."/>
            <person name="Rosenblum M.D."/>
            <person name="Dell S.D."/>
            <person name="Waterfield M.R."/>
            <person name="Papa F.R."/>
            <person name="Muzny D.M."/>
            <person name="Zaitlen N."/>
            <person name="Leal S.M."/>
            <person name="Gonzaga-Jauregui C."/>
            <person name="Boerwinkle E."/>
            <person name="Eissa N.T."/>
            <person name="Gibbs R.A."/>
            <person name="Lupski J.R."/>
            <person name="Orange J.S."/>
            <person name="Shum A.K."/>
        </authorList>
    </citation>
    <scope>INVOLVEMENT IN AIAISD</scope>
    <scope>VARIANTS AIAISD ASN-230; HIS-233; LYS-241 AND GLY-243</scope>
    <scope>CHARACTERIZATION OF VARIANTS AIAISD ASN-230 AND LYS-241</scope>
</reference>
<reference key="24">
    <citation type="journal article" date="2015" name="Proteomics">
        <title>N-terminome analysis of the human mitochondrial proteome.</title>
        <authorList>
            <person name="Vaca Jacome A.S."/>
            <person name="Rabilloud T."/>
            <person name="Schaeffer-Reiss C."/>
            <person name="Rompais M."/>
            <person name="Ayoub D."/>
            <person name="Lane L."/>
            <person name="Bairoch A."/>
            <person name="Van Dorsselaer A."/>
            <person name="Carapito C."/>
        </authorList>
    </citation>
    <scope>IDENTIFICATION BY MASS SPECTROMETRY [LARGE SCALE ANALYSIS]</scope>
</reference>
<reference key="25">
    <citation type="journal article" date="2018" name="Biochem. Biophys. Res. Commun.">
        <title>Stasimon/Tmem41b localizes to mitochondria-associated ER membranes and is essential for mouse embryonic development.</title>
        <authorList>
            <person name="Van Alstyne M."/>
            <person name="Lotti F."/>
            <person name="Dal Mas A."/>
            <person name="Area-Gomez E."/>
            <person name="Pellizzoni L."/>
        </authorList>
    </citation>
    <scope>INTERACTION WITH TMEM41B</scope>
</reference>
<dbReference type="EMBL" id="U24105">
    <property type="protein sequence ID" value="AAB70879.1"/>
    <property type="molecule type" value="mRNA"/>
</dbReference>
<dbReference type="EMBL" id="AL513282">
    <property type="status" value="NOT_ANNOTATED_CDS"/>
    <property type="molecule type" value="Genomic_DNA"/>
</dbReference>
<dbReference type="EMBL" id="AL445230">
    <property type="status" value="NOT_ANNOTATED_CDS"/>
    <property type="molecule type" value="Genomic_DNA"/>
</dbReference>
<dbReference type="EMBL" id="CH471121">
    <property type="protein sequence ID" value="EAW52723.1"/>
    <property type="molecule type" value="Genomic_DNA"/>
</dbReference>
<dbReference type="EMBL" id="CH471121">
    <property type="protein sequence ID" value="EAW52725.1"/>
    <property type="molecule type" value="Genomic_DNA"/>
</dbReference>
<dbReference type="EMBL" id="BC038447">
    <property type="protein sequence ID" value="AAH38447.1"/>
    <property type="molecule type" value="mRNA"/>
</dbReference>
<dbReference type="CCDS" id="CCDS1202.1">
    <molecule id="P53621-1"/>
</dbReference>
<dbReference type="CCDS" id="CCDS41424.1">
    <molecule id="P53621-2"/>
</dbReference>
<dbReference type="PIR" id="JC4668">
    <property type="entry name" value="ERHUAH"/>
</dbReference>
<dbReference type="RefSeq" id="NP_001091868.1">
    <molecule id="P53621-2"/>
    <property type="nucleotide sequence ID" value="NM_001098398.2"/>
</dbReference>
<dbReference type="RefSeq" id="NP_004362.2">
    <molecule id="P53621-1"/>
    <property type="nucleotide sequence ID" value="NM_004371.4"/>
</dbReference>
<dbReference type="PDB" id="6PBG">
    <property type="method" value="X-ray"/>
    <property type="resolution" value="1.72 A"/>
    <property type="chains" value="A=1-320"/>
</dbReference>
<dbReference type="PDB" id="6TZT">
    <property type="method" value="X-ray"/>
    <property type="resolution" value="3.06 A"/>
    <property type="chains" value="B/D=870-1224"/>
</dbReference>
<dbReference type="PDB" id="6U3V">
    <property type="method" value="X-ray"/>
    <property type="resolution" value="2.96 A"/>
    <property type="chains" value="B/D=835-1224"/>
</dbReference>
<dbReference type="PDBsum" id="6PBG"/>
<dbReference type="PDBsum" id="6TZT"/>
<dbReference type="PDBsum" id="6U3V"/>
<dbReference type="SMR" id="P53621"/>
<dbReference type="BioGRID" id="107709">
    <property type="interactions" value="434"/>
</dbReference>
<dbReference type="ComplexPortal" id="CPX-7803">
    <property type="entry name" value="COPI vesicle coat complex, COPG1-COPZ1 variant"/>
</dbReference>
<dbReference type="ComplexPortal" id="CPX-7969">
    <property type="entry name" value="COPI vesicle coat complex, COPG2-COPZ1 variant"/>
</dbReference>
<dbReference type="ComplexPortal" id="CPX-7970">
    <property type="entry name" value="COPI vesicle coat complex, COPG1-COPZ2 variant"/>
</dbReference>
<dbReference type="FunCoup" id="P53621">
    <property type="interactions" value="3391"/>
</dbReference>
<dbReference type="IntAct" id="P53621">
    <property type="interactions" value="210"/>
</dbReference>
<dbReference type="MINT" id="P53621"/>
<dbReference type="STRING" id="9606.ENSP00000357048"/>
<dbReference type="GlyCosmos" id="P53621">
    <property type="glycosylation" value="2 sites, 1 glycan"/>
</dbReference>
<dbReference type="GlyGen" id="P53621">
    <property type="glycosylation" value="4 sites, 4 N-linked glycans (1 site), 1 O-linked glycan (2 sites)"/>
</dbReference>
<dbReference type="iPTMnet" id="P53621"/>
<dbReference type="MetOSite" id="P53621"/>
<dbReference type="PhosphoSitePlus" id="P53621"/>
<dbReference type="SwissPalm" id="P53621"/>
<dbReference type="BioMuta" id="COPA"/>
<dbReference type="DMDM" id="205371746"/>
<dbReference type="jPOST" id="P53621"/>
<dbReference type="MassIVE" id="P53621"/>
<dbReference type="PaxDb" id="9606-ENSP00000357048"/>
<dbReference type="PeptideAtlas" id="P53621"/>
<dbReference type="ProteomicsDB" id="56593">
    <molecule id="P53621-1"/>
</dbReference>
<dbReference type="ProteomicsDB" id="56594">
    <molecule id="P53621-2"/>
</dbReference>
<dbReference type="Pumba" id="P53621"/>
<dbReference type="Antibodypedia" id="34275">
    <property type="antibodies" value="137 antibodies from 25 providers"/>
</dbReference>
<dbReference type="DNASU" id="1314"/>
<dbReference type="Ensembl" id="ENST00000241704.8">
    <molecule id="P53621-1"/>
    <property type="protein sequence ID" value="ENSP00000241704.7"/>
    <property type="gene ID" value="ENSG00000122218.17"/>
</dbReference>
<dbReference type="Ensembl" id="ENST00000368069.7">
    <molecule id="P53621-2"/>
    <property type="protein sequence ID" value="ENSP00000357048.3"/>
    <property type="gene ID" value="ENSG00000122218.17"/>
</dbReference>
<dbReference type="GeneID" id="1314"/>
<dbReference type="KEGG" id="hsa:1314"/>
<dbReference type="MANE-Select" id="ENST00000241704.8">
    <property type="protein sequence ID" value="ENSP00000241704.7"/>
    <property type="RefSeq nucleotide sequence ID" value="NM_004371.4"/>
    <property type="RefSeq protein sequence ID" value="NP_004362.2"/>
</dbReference>
<dbReference type="UCSC" id="uc001fvv.5">
    <molecule id="P53621-1"/>
    <property type="organism name" value="human"/>
</dbReference>
<dbReference type="AGR" id="HGNC:2230"/>
<dbReference type="CTD" id="1314"/>
<dbReference type="DisGeNET" id="1314"/>
<dbReference type="GeneCards" id="COPA"/>
<dbReference type="HGNC" id="HGNC:2230">
    <property type="gene designation" value="COPA"/>
</dbReference>
<dbReference type="HPA" id="ENSG00000122218">
    <property type="expression patterns" value="Low tissue specificity"/>
</dbReference>
<dbReference type="MalaCards" id="COPA"/>
<dbReference type="MIM" id="601924">
    <property type="type" value="gene"/>
</dbReference>
<dbReference type="MIM" id="616414">
    <property type="type" value="phenotype"/>
</dbReference>
<dbReference type="neXtProt" id="NX_P53621"/>
<dbReference type="OpenTargets" id="ENSG00000122218"/>
<dbReference type="Orphanet" id="444092">
    <property type="disease" value="Autoimmune interstitial lung disease-arthritis syndrome"/>
</dbReference>
<dbReference type="PharmGKB" id="PA26746"/>
<dbReference type="VEuPathDB" id="HostDB:ENSG00000122218"/>
<dbReference type="eggNOG" id="KOG0292">
    <property type="taxonomic scope" value="Eukaryota"/>
</dbReference>
<dbReference type="GeneTree" id="ENSGT00940000155451"/>
<dbReference type="HOGENOM" id="CLU_007565_1_0_1"/>
<dbReference type="InParanoid" id="P53621"/>
<dbReference type="OMA" id="EMTYQKQ"/>
<dbReference type="OrthoDB" id="10261470at2759"/>
<dbReference type="PAN-GO" id="P53621">
    <property type="GO annotations" value="5 GO annotations based on evolutionary models"/>
</dbReference>
<dbReference type="PhylomeDB" id="P53621"/>
<dbReference type="TreeFam" id="TF105693"/>
<dbReference type="PathwayCommons" id="P53621"/>
<dbReference type="Reactome" id="R-HSA-6807878">
    <property type="pathway name" value="COPI-mediated anterograde transport"/>
</dbReference>
<dbReference type="Reactome" id="R-HSA-6811434">
    <property type="pathway name" value="COPI-dependent Golgi-to-ER retrograde traffic"/>
</dbReference>
<dbReference type="SignaLink" id="P53621"/>
<dbReference type="BioGRID-ORCS" id="1314">
    <property type="hits" value="839 hits in 1126 CRISPR screens"/>
</dbReference>
<dbReference type="CD-CODE" id="91857CE7">
    <property type="entry name" value="Nucleolus"/>
</dbReference>
<dbReference type="CD-CODE" id="FB4E32DD">
    <property type="entry name" value="Presynaptic clusters and postsynaptic densities"/>
</dbReference>
<dbReference type="ChiTaRS" id="COPA">
    <property type="organism name" value="human"/>
</dbReference>
<dbReference type="GeneWiki" id="COPA_(gene)"/>
<dbReference type="GenomeRNAi" id="1314"/>
<dbReference type="Pharos" id="P53621">
    <property type="development level" value="Tbio"/>
</dbReference>
<dbReference type="PRO" id="PR:P53621"/>
<dbReference type="Proteomes" id="UP000005640">
    <property type="component" value="Chromosome 1"/>
</dbReference>
<dbReference type="RNAct" id="P53621">
    <property type="molecule type" value="protein"/>
</dbReference>
<dbReference type="Bgee" id="ENSG00000122218">
    <property type="expression patterns" value="Expressed in stromal cell of endometrium and 212 other cell types or tissues"/>
</dbReference>
<dbReference type="ExpressionAtlas" id="P53621">
    <property type="expression patterns" value="baseline and differential"/>
</dbReference>
<dbReference type="GO" id="GO:0030126">
    <property type="term" value="C:COPI vesicle coat"/>
    <property type="evidence" value="ECO:0000314"/>
    <property type="project" value="MGI"/>
</dbReference>
<dbReference type="GO" id="GO:0005737">
    <property type="term" value="C:cytoplasm"/>
    <property type="evidence" value="ECO:0000314"/>
    <property type="project" value="MGI"/>
</dbReference>
<dbReference type="GO" id="GO:0005829">
    <property type="term" value="C:cytosol"/>
    <property type="evidence" value="ECO:0000304"/>
    <property type="project" value="Reactome"/>
</dbReference>
<dbReference type="GO" id="GO:0005789">
    <property type="term" value="C:endoplasmic reticulum membrane"/>
    <property type="evidence" value="ECO:0000304"/>
    <property type="project" value="Reactome"/>
</dbReference>
<dbReference type="GO" id="GO:0070062">
    <property type="term" value="C:extracellular exosome"/>
    <property type="evidence" value="ECO:0007005"/>
    <property type="project" value="UniProtKB"/>
</dbReference>
<dbReference type="GO" id="GO:0005615">
    <property type="term" value="C:extracellular space"/>
    <property type="evidence" value="ECO:0000314"/>
    <property type="project" value="MGI"/>
</dbReference>
<dbReference type="GO" id="GO:0000139">
    <property type="term" value="C:Golgi membrane"/>
    <property type="evidence" value="ECO:0000304"/>
    <property type="project" value="Reactome"/>
</dbReference>
<dbReference type="GO" id="GO:0030426">
    <property type="term" value="C:growth cone"/>
    <property type="evidence" value="ECO:0000314"/>
    <property type="project" value="MGI"/>
</dbReference>
<dbReference type="GO" id="GO:0016020">
    <property type="term" value="C:membrane"/>
    <property type="evidence" value="ECO:0007005"/>
    <property type="project" value="UniProtKB"/>
</dbReference>
<dbReference type="GO" id="GO:0030133">
    <property type="term" value="C:transport vesicle"/>
    <property type="evidence" value="ECO:0000304"/>
    <property type="project" value="Reactome"/>
</dbReference>
<dbReference type="GO" id="GO:0005179">
    <property type="term" value="F:hormone activity"/>
    <property type="evidence" value="ECO:0007669"/>
    <property type="project" value="UniProtKB-KW"/>
</dbReference>
<dbReference type="GO" id="GO:0003729">
    <property type="term" value="F:mRNA binding"/>
    <property type="evidence" value="ECO:0007669"/>
    <property type="project" value="Ensembl"/>
</dbReference>
<dbReference type="GO" id="GO:0005198">
    <property type="term" value="F:structural molecule activity"/>
    <property type="evidence" value="ECO:0007669"/>
    <property type="project" value="InterPro"/>
</dbReference>
<dbReference type="GO" id="GO:0006888">
    <property type="term" value="P:endoplasmic reticulum to Golgi vesicle-mediated transport"/>
    <property type="evidence" value="ECO:0000318"/>
    <property type="project" value="GO_Central"/>
</dbReference>
<dbReference type="GO" id="GO:0006891">
    <property type="term" value="P:intra-Golgi vesicle-mediated transport"/>
    <property type="evidence" value="ECO:0000318"/>
    <property type="project" value="GO_Central"/>
</dbReference>
<dbReference type="GO" id="GO:0006886">
    <property type="term" value="P:intracellular protein transport"/>
    <property type="evidence" value="ECO:0000318"/>
    <property type="project" value="GO_Central"/>
</dbReference>
<dbReference type="GO" id="GO:0030157">
    <property type="term" value="P:pancreatic juice secretion"/>
    <property type="evidence" value="ECO:0000314"/>
    <property type="project" value="MGI"/>
</dbReference>
<dbReference type="GO" id="GO:0099612">
    <property type="term" value="P:protein localization to axon"/>
    <property type="evidence" value="ECO:0007669"/>
    <property type="project" value="Ensembl"/>
</dbReference>
<dbReference type="GO" id="GO:1902463">
    <property type="term" value="P:protein localization to cell leading edge"/>
    <property type="evidence" value="ECO:0007669"/>
    <property type="project" value="Ensembl"/>
</dbReference>
<dbReference type="GO" id="GO:0006890">
    <property type="term" value="P:retrograde vesicle-mediated transport, Golgi to endoplasmic reticulum"/>
    <property type="evidence" value="ECO:0000318"/>
    <property type="project" value="GO_Central"/>
</dbReference>
<dbReference type="CDD" id="cd22948">
    <property type="entry name" value="Coatomer_WDAD_alpha"/>
    <property type="match status" value="1"/>
</dbReference>
<dbReference type="CDD" id="cd00200">
    <property type="entry name" value="WD40"/>
    <property type="match status" value="1"/>
</dbReference>
<dbReference type="FunFam" id="1.25.40.470:FF:000002">
    <property type="entry name" value="Coatomer subunit alpha"/>
    <property type="match status" value="1"/>
</dbReference>
<dbReference type="FunFam" id="2.130.10.10:FF:000010">
    <property type="entry name" value="Coatomer subunit alpha"/>
    <property type="match status" value="1"/>
</dbReference>
<dbReference type="Gene3D" id="1.25.40.470">
    <property type="match status" value="1"/>
</dbReference>
<dbReference type="Gene3D" id="2.130.10.10">
    <property type="entry name" value="YVTN repeat-like/Quinoprotein amine dehydrogenase"/>
    <property type="match status" value="1"/>
</dbReference>
<dbReference type="InterPro" id="IPR006692">
    <property type="entry name" value="Beta-prop_COPA/B_2nd"/>
</dbReference>
<dbReference type="InterPro" id="IPR047312">
    <property type="entry name" value="Coatomer_alpha_WD-assoc_reg"/>
</dbReference>
<dbReference type="InterPro" id="IPR016391">
    <property type="entry name" value="Coatomer_asu"/>
</dbReference>
<dbReference type="InterPro" id="IPR010714">
    <property type="entry name" value="Coatomer_asu_C"/>
</dbReference>
<dbReference type="InterPro" id="IPR050844">
    <property type="entry name" value="Coatomer_complex_subunit"/>
</dbReference>
<dbReference type="InterPro" id="IPR020472">
    <property type="entry name" value="G-protein_beta_WD-40_rep"/>
</dbReference>
<dbReference type="InterPro" id="IPR011048">
    <property type="entry name" value="Haem_d1_sf"/>
</dbReference>
<dbReference type="InterPro" id="IPR056176">
    <property type="entry name" value="TPR_COPA_B"/>
</dbReference>
<dbReference type="InterPro" id="IPR015943">
    <property type="entry name" value="WD40/YVTN_repeat-like_dom_sf"/>
</dbReference>
<dbReference type="InterPro" id="IPR019775">
    <property type="entry name" value="WD40_repeat_CS"/>
</dbReference>
<dbReference type="InterPro" id="IPR036322">
    <property type="entry name" value="WD40_repeat_dom_sf"/>
</dbReference>
<dbReference type="InterPro" id="IPR001680">
    <property type="entry name" value="WD40_rpt"/>
</dbReference>
<dbReference type="PANTHER" id="PTHR19876">
    <property type="entry name" value="COATOMER"/>
    <property type="match status" value="1"/>
</dbReference>
<dbReference type="PANTHER" id="PTHR19876:SF1">
    <property type="entry name" value="COATOMER SUBUNIT ALPHA"/>
    <property type="match status" value="1"/>
</dbReference>
<dbReference type="Pfam" id="PF04053">
    <property type="entry name" value="B-prop_COPA_B_2nd"/>
    <property type="match status" value="1"/>
</dbReference>
<dbReference type="Pfam" id="PF06957">
    <property type="entry name" value="COPI_C"/>
    <property type="match status" value="1"/>
</dbReference>
<dbReference type="Pfam" id="PF23953">
    <property type="entry name" value="TPR_COPA_B"/>
    <property type="match status" value="1"/>
</dbReference>
<dbReference type="Pfam" id="PF00400">
    <property type="entry name" value="WD40"/>
    <property type="match status" value="6"/>
</dbReference>
<dbReference type="PIRSF" id="PIRSF003354">
    <property type="entry name" value="Coatomer_alpha_subunit"/>
    <property type="match status" value="1"/>
</dbReference>
<dbReference type="PRINTS" id="PR00320">
    <property type="entry name" value="GPROTEINBRPT"/>
</dbReference>
<dbReference type="SMART" id="SM00320">
    <property type="entry name" value="WD40"/>
    <property type="match status" value="7"/>
</dbReference>
<dbReference type="SUPFAM" id="SSF51004">
    <property type="entry name" value="C-terminal (heme d1) domain of cytochrome cd1-nitrite reductase"/>
    <property type="match status" value="1"/>
</dbReference>
<dbReference type="SUPFAM" id="SSF50978">
    <property type="entry name" value="WD40 repeat-like"/>
    <property type="match status" value="1"/>
</dbReference>
<dbReference type="PROSITE" id="PS00678">
    <property type="entry name" value="WD_REPEATS_1"/>
    <property type="match status" value="1"/>
</dbReference>
<dbReference type="PROSITE" id="PS50082">
    <property type="entry name" value="WD_REPEATS_2"/>
    <property type="match status" value="6"/>
</dbReference>
<dbReference type="PROSITE" id="PS50294">
    <property type="entry name" value="WD_REPEATS_REGION"/>
    <property type="match status" value="1"/>
</dbReference>
<evidence type="ECO:0000250" key="1"/>
<evidence type="ECO:0000250" key="2">
    <source>
        <dbReference type="UniProtKB" id="Q8CIE6"/>
    </source>
</evidence>
<evidence type="ECO:0000269" key="3">
    <source>
    </source>
</evidence>
<evidence type="ECO:0000269" key="4">
    <source>
    </source>
</evidence>
<evidence type="ECO:0000269" key="5">
    <source>
    </source>
</evidence>
<evidence type="ECO:0000269" key="6">
    <source>
    </source>
</evidence>
<evidence type="ECO:0000303" key="7">
    <source>
    </source>
</evidence>
<evidence type="ECO:0000305" key="8"/>
<evidence type="ECO:0007744" key="9">
    <source>
    </source>
</evidence>
<evidence type="ECO:0007744" key="10">
    <source>
    </source>
</evidence>
<evidence type="ECO:0007744" key="11">
    <source>
    </source>
</evidence>
<evidence type="ECO:0007744" key="12">
    <source>
    </source>
</evidence>
<evidence type="ECO:0007744" key="13">
    <source>
    </source>
</evidence>
<evidence type="ECO:0007744" key="14">
    <source>
    </source>
</evidence>
<evidence type="ECO:0007744" key="15">
    <source>
    </source>
</evidence>
<evidence type="ECO:0007744" key="16">
    <source>
    </source>
</evidence>
<evidence type="ECO:0007744" key="17">
    <source>
    </source>
</evidence>
<evidence type="ECO:0007744" key="18">
    <source>
    </source>
</evidence>
<evidence type="ECO:0007829" key="19">
    <source>
        <dbReference type="PDB" id="6PBG"/>
    </source>
</evidence>
<evidence type="ECO:0007829" key="20">
    <source>
        <dbReference type="PDB" id="6U3V"/>
    </source>
</evidence>
<proteinExistence type="evidence at protein level"/>
<protein>
    <recommendedName>
        <fullName>Coatomer subunit alpha</fullName>
    </recommendedName>
    <alternativeName>
        <fullName>Alpha-coat protein</fullName>
        <shortName>Alpha-COP</shortName>
    </alternativeName>
    <alternativeName>
        <fullName>HEP-COP</fullName>
        <shortName>HEPCOP</shortName>
    </alternativeName>
    <component>
        <recommendedName>
            <fullName>Xenin</fullName>
        </recommendedName>
        <alternativeName>
            <fullName>Xenopsin-related peptide</fullName>
        </alternativeName>
    </component>
    <component>
        <recommendedName>
            <fullName>Proxenin</fullName>
        </recommendedName>
    </component>
</protein>
<keyword id="KW-0002">3D-structure</keyword>
<keyword id="KW-0025">Alternative splicing</keyword>
<keyword id="KW-0963">Cytoplasm</keyword>
<keyword id="KW-0968">Cytoplasmic vesicle</keyword>
<keyword id="KW-0903">Direct protein sequencing</keyword>
<keyword id="KW-0225">Disease variant</keyword>
<keyword id="KW-0931">ER-Golgi transport</keyword>
<keyword id="KW-0333">Golgi apparatus</keyword>
<keyword id="KW-0372">Hormone</keyword>
<keyword id="KW-0472">Membrane</keyword>
<keyword id="KW-0488">Methylation</keyword>
<keyword id="KW-0597">Phosphoprotein</keyword>
<keyword id="KW-0653">Protein transport</keyword>
<keyword id="KW-1267">Proteomics identification</keyword>
<keyword id="KW-1185">Reference proteome</keyword>
<keyword id="KW-0677">Repeat</keyword>
<keyword id="KW-0691">RNA editing</keyword>
<keyword id="KW-0964">Secreted</keyword>
<keyword id="KW-0813">Transport</keyword>
<keyword id="KW-0853">WD repeat</keyword>
<sequence>MLTKFETKSARVKGLSFHPKRPWILTSLHNGVIQLWDYRMCTLIDKFDEHDGPVRGIDFHKQQPLFVSGGDDYKIKVWNYKLRRCLFTLLGHLDYIRTTFFHHEYPWILSASDDQTIRVWNWQSRTCVCVLTGHNHYVMCAQFHPTEDLVVSASLDQTVRVWDISGLRKKNLSPGAVESDVRGITGVDLFGTTDAVVKHVLEGHDRGVNWAAFHPTMPLIVSGADDRQVKIWRMNESKAWEVDTCRGHYNNVSCAVFHPRQELILSNSEDKSIRVWDMSKRTGVQTFRRDHDRFWVLAAHPNLNLFAAGHDGGMIVFKLERERPAYAVHGNMLHYVKDRFLRQLDFNSSKDVAVMQLRSGSKFPVFNMSYNPAENAVLLCTRASNLENSTYDLYTIPKDADSQNPDAPEGKRSSGLTAVWVARNRFAVLDRMHSLLIKNLKNEITKKVQVPNCDEIFYAGTGNLLLRDADSITLFDVQQKRTLASVKISKVKYVIWSADMSHVALLAKHAIVICNRKLDALCNIHENIRVKSGAWDESGVFIYTTSNHIKYAVTTGDHGIIRTLDLPIYVTRVKGNNVYCLDRECRPRVLTIDPTEFKFKLALINRKYDEVLHMVRNAKLVGQSIIAYLQKKGYPEVALHFVKDEKTRFSLALECGNIEIALEAAKALDDKNCWEKLGEVALLQGNHQIVEMCYQRTKNFDKLSFLYLITGNLEKLRKMMKIAEIRKDMSGHYQNALYLGDVSERVRILKNCGQKSLAYLTAATHGLDEEAESLKETFDPEKETIPDIDPNAKLLQPPAPIMPLDTNWPLLTVSKGFFEGTIASKGKGGALAADIDIDTVGTEGWGEDAELQLDEDGFVEATEGLGDDALGKGQEEGGGWDVEEDLELPPELDISPGAAGGAEDGFFVPPTKGTSPTQIWCNNSQLPVDHILAGSFETAMRLLHDQVGVIQFGPYKQLFLQTYARGRTTYQALPCLPSMYGYPNRNWKDAGLKNGVPAVGLKLNDLIQRLQLCYQLTTVGKFEEAVEKFRSILLSVPLLVVDNKQEIAEAQQLITICREYIVGLSVETERKKLPKETLEQQKRICEMAAYFTHSNLQPVHMILVLRTALNLFFKLKNFKTAATFARRLLELGPKPEVAQQTRKILSACEKNPTDAYQLNYDMHNPFDICAASYRPIYRGKPVEKCPLSGACYSPEFKGQICRVTTVTEIGKDVIGLRISPLQFR</sequence>
<gene>
    <name type="primary">COPA</name>
</gene>